<accession>A0QHH8</accession>
<protein>
    <recommendedName>
        <fullName evidence="1">Phosphoribosyl isomerase A</fullName>
    </recommendedName>
    <alternativeName>
        <fullName evidence="1">1-(5-phosphoribosyl)-5-[(5-phosphoribosylamino)methylideneamino] imidazole-4-carboxamide isomerase</fullName>
        <ecNumber evidence="1">5.3.1.16</ecNumber>
    </alternativeName>
    <alternativeName>
        <fullName evidence="1">N-(5'-phosphoribosyl)anthranilate isomerase</fullName>
        <shortName evidence="1">PRAI</shortName>
        <ecNumber evidence="1">5.3.1.24</ecNumber>
    </alternativeName>
    <alternativeName>
        <fullName evidence="1">Phosphoribosylformimino-5-aminoimidazole carboxamide ribotide isomerase</fullName>
    </alternativeName>
</protein>
<reference key="1">
    <citation type="submission" date="2006-10" db="EMBL/GenBank/DDBJ databases">
        <authorList>
            <person name="Fleischmann R.D."/>
            <person name="Dodson R.J."/>
            <person name="Haft D.H."/>
            <person name="Merkel J.S."/>
            <person name="Nelson W.C."/>
            <person name="Fraser C.M."/>
        </authorList>
    </citation>
    <scope>NUCLEOTIDE SEQUENCE [LARGE SCALE GENOMIC DNA]</scope>
    <source>
        <strain>104</strain>
    </source>
</reference>
<organism>
    <name type="scientific">Mycobacterium avium (strain 104)</name>
    <dbReference type="NCBI Taxonomy" id="243243"/>
    <lineage>
        <taxon>Bacteria</taxon>
        <taxon>Bacillati</taxon>
        <taxon>Actinomycetota</taxon>
        <taxon>Actinomycetes</taxon>
        <taxon>Mycobacteriales</taxon>
        <taxon>Mycobacteriaceae</taxon>
        <taxon>Mycobacterium</taxon>
        <taxon>Mycobacterium avium complex (MAC)</taxon>
    </lineage>
</organism>
<evidence type="ECO:0000255" key="1">
    <source>
        <dbReference type="HAMAP-Rule" id="MF_01014"/>
    </source>
</evidence>
<keyword id="KW-0028">Amino-acid biosynthesis</keyword>
<keyword id="KW-0057">Aromatic amino acid biosynthesis</keyword>
<keyword id="KW-0963">Cytoplasm</keyword>
<keyword id="KW-0368">Histidine biosynthesis</keyword>
<keyword id="KW-0413">Isomerase</keyword>
<keyword id="KW-0822">Tryptophan biosynthesis</keyword>
<comment type="function">
    <text evidence="1">Involved in both the histidine and tryptophan biosynthetic pathways.</text>
</comment>
<comment type="catalytic activity">
    <reaction evidence="1">
        <text>1-(5-phospho-beta-D-ribosyl)-5-[(5-phospho-beta-D-ribosylamino)methylideneamino]imidazole-4-carboxamide = 5-[(5-phospho-1-deoxy-D-ribulos-1-ylimino)methylamino]-1-(5-phospho-beta-D-ribosyl)imidazole-4-carboxamide</text>
        <dbReference type="Rhea" id="RHEA:15469"/>
        <dbReference type="ChEBI" id="CHEBI:58435"/>
        <dbReference type="ChEBI" id="CHEBI:58525"/>
        <dbReference type="EC" id="5.3.1.16"/>
    </reaction>
</comment>
<comment type="catalytic activity">
    <reaction evidence="1">
        <text>N-(5-phospho-beta-D-ribosyl)anthranilate = 1-(2-carboxyphenylamino)-1-deoxy-D-ribulose 5-phosphate</text>
        <dbReference type="Rhea" id="RHEA:21540"/>
        <dbReference type="ChEBI" id="CHEBI:18277"/>
        <dbReference type="ChEBI" id="CHEBI:58613"/>
        <dbReference type="EC" id="5.3.1.24"/>
    </reaction>
</comment>
<comment type="pathway">
    <text evidence="1">Amino-acid biosynthesis; L-histidine biosynthesis; L-histidine from 5-phospho-alpha-D-ribose 1-diphosphate: step 4/9.</text>
</comment>
<comment type="pathway">
    <text evidence="1">Amino-acid biosynthesis; L-tryptophan biosynthesis; L-tryptophan from chorismate: step 3/5.</text>
</comment>
<comment type="subcellular location">
    <subcellularLocation>
        <location evidence="1">Cytoplasm</location>
    </subcellularLocation>
</comment>
<comment type="similarity">
    <text evidence="1">Belongs to the HisA/HisF family.</text>
</comment>
<name>HIS4_MYCA1</name>
<feature type="chain" id="PRO_0000290564" description="Phosphoribosyl isomerase A">
    <location>
        <begin position="1"/>
        <end position="243"/>
    </location>
</feature>
<feature type="active site" description="Proton acceptor" evidence="1">
    <location>
        <position position="9"/>
    </location>
</feature>
<feature type="active site" description="Proton donor" evidence="1">
    <location>
        <position position="128"/>
    </location>
</feature>
<proteinExistence type="inferred from homology"/>
<gene>
    <name evidence="1" type="primary">priA</name>
    <name evidence="1" type="synonym">hisA</name>
    <name type="ordered locus">MAV_3183</name>
</gene>
<sequence>MLILLPAVDVVDGRAVRLVQGKAGSETEYGSALDAALGWQRDGAEWIHLVDLDAAFGRGSNRELLAEVVGKLDVQVELSGGIRDDDSLAAALATGCARVNLGTAALENPQWCARAIGEHGDKVAVGLDVQTIDGQHRLRGRGWETDGGDLWEVLERLERQGCSRYVVTDVTKDGTLGGPNLDLLGAVADRTDAPVIASGGVSSLDDLRAIATLTGRGVEGAIVGKALYAGRFTLPQALAAVAE</sequence>
<dbReference type="EC" id="5.3.1.16" evidence="1"/>
<dbReference type="EC" id="5.3.1.24" evidence="1"/>
<dbReference type="EMBL" id="CP000479">
    <property type="protein sequence ID" value="ABK65541.1"/>
    <property type="molecule type" value="Genomic_DNA"/>
</dbReference>
<dbReference type="RefSeq" id="WP_009977380.1">
    <property type="nucleotide sequence ID" value="NC_008595.1"/>
</dbReference>
<dbReference type="SMR" id="A0QHH8"/>
<dbReference type="KEGG" id="mav:MAV_3183"/>
<dbReference type="HOGENOM" id="CLU_048577_1_1_11"/>
<dbReference type="UniPathway" id="UPA00031">
    <property type="reaction ID" value="UER00009"/>
</dbReference>
<dbReference type="UniPathway" id="UPA00035">
    <property type="reaction ID" value="UER00042"/>
</dbReference>
<dbReference type="Proteomes" id="UP000001574">
    <property type="component" value="Chromosome"/>
</dbReference>
<dbReference type="GO" id="GO:0005737">
    <property type="term" value="C:cytoplasm"/>
    <property type="evidence" value="ECO:0007669"/>
    <property type="project" value="UniProtKB-SubCell"/>
</dbReference>
<dbReference type="GO" id="GO:0003949">
    <property type="term" value="F:1-(5-phosphoribosyl)-5-[(5-phosphoribosylamino)methylideneamino]imidazole-4-carboxamide isomerase activity"/>
    <property type="evidence" value="ECO:0007669"/>
    <property type="project" value="UniProtKB-UniRule"/>
</dbReference>
<dbReference type="GO" id="GO:0004640">
    <property type="term" value="F:phosphoribosylanthranilate isomerase activity"/>
    <property type="evidence" value="ECO:0007669"/>
    <property type="project" value="UniProtKB-UniRule"/>
</dbReference>
<dbReference type="GO" id="GO:0000105">
    <property type="term" value="P:L-histidine biosynthetic process"/>
    <property type="evidence" value="ECO:0007669"/>
    <property type="project" value="UniProtKB-UniRule"/>
</dbReference>
<dbReference type="GO" id="GO:0000162">
    <property type="term" value="P:L-tryptophan biosynthetic process"/>
    <property type="evidence" value="ECO:0007669"/>
    <property type="project" value="UniProtKB-UniRule"/>
</dbReference>
<dbReference type="CDD" id="cd04732">
    <property type="entry name" value="HisA"/>
    <property type="match status" value="1"/>
</dbReference>
<dbReference type="FunFam" id="3.20.20.70:FF:000009">
    <property type="entry name" value="1-(5-phosphoribosyl)-5-[(5-phosphoribosylamino)methylideneamino] imidazole-4-carboxamide isomerase"/>
    <property type="match status" value="1"/>
</dbReference>
<dbReference type="Gene3D" id="3.20.20.70">
    <property type="entry name" value="Aldolase class I"/>
    <property type="match status" value="1"/>
</dbReference>
<dbReference type="HAMAP" id="MF_01014">
    <property type="entry name" value="HisA"/>
    <property type="match status" value="1"/>
</dbReference>
<dbReference type="InterPro" id="IPR013785">
    <property type="entry name" value="Aldolase_TIM"/>
</dbReference>
<dbReference type="InterPro" id="IPR006062">
    <property type="entry name" value="His_biosynth"/>
</dbReference>
<dbReference type="InterPro" id="IPR010188">
    <property type="entry name" value="HisA/PriA_Actinobacteria"/>
</dbReference>
<dbReference type="InterPro" id="IPR044524">
    <property type="entry name" value="Isoase_HisA-like"/>
</dbReference>
<dbReference type="InterPro" id="IPR023016">
    <property type="entry name" value="Isoase_HisA-like_bact"/>
</dbReference>
<dbReference type="InterPro" id="IPR011060">
    <property type="entry name" value="RibuloseP-bd_barrel"/>
</dbReference>
<dbReference type="NCBIfam" id="TIGR01919">
    <property type="entry name" value="hisA-trpF"/>
    <property type="match status" value="1"/>
</dbReference>
<dbReference type="PANTHER" id="PTHR43090">
    <property type="entry name" value="1-(5-PHOSPHORIBOSYL)-5-[(5-PHOSPHORIBOSYLAMINO)METHYLIDENEAMINO] IMIDAZOLE-4-CARBOXAMIDE ISOMERASE"/>
    <property type="match status" value="1"/>
</dbReference>
<dbReference type="PANTHER" id="PTHR43090:SF2">
    <property type="entry name" value="1-(5-PHOSPHORIBOSYL)-5-[(5-PHOSPHORIBOSYLAMINO)METHYLIDENEAMINO] IMIDAZOLE-4-CARBOXAMIDE ISOMERASE"/>
    <property type="match status" value="1"/>
</dbReference>
<dbReference type="Pfam" id="PF00977">
    <property type="entry name" value="His_biosynth"/>
    <property type="match status" value="1"/>
</dbReference>
<dbReference type="SUPFAM" id="SSF51366">
    <property type="entry name" value="Ribulose-phoshate binding barrel"/>
    <property type="match status" value="1"/>
</dbReference>